<gene>
    <name type="ordered locus">MJ0271</name>
</gene>
<evidence type="ECO:0000255" key="1"/>
<evidence type="ECO:0000305" key="2"/>
<sequence length="180" mass="20813">MDLKSNIKLILATDLLAVLILSLFIKNFKMVLAFLLAVFVIWLFIDKNNINERLYENLLAMSVGFIEGILIFLGIIYNEVFLDITLGIFAILILIVMGILFPKYKLIFEVFDEFVEHLKQKSGFLTLISIFGMLLTIYVFLLILPSKEFCINAVDIIRTIMLVITANMFIIEFYTFKKFS</sequence>
<feature type="chain" id="PRO_0000106764" description="Uncharacterized protein MJ0271">
    <location>
        <begin position="1"/>
        <end position="180"/>
    </location>
</feature>
<feature type="transmembrane region" description="Helical" evidence="1">
    <location>
        <begin position="4"/>
        <end position="24"/>
    </location>
</feature>
<feature type="transmembrane region" description="Helical" evidence="1">
    <location>
        <begin position="25"/>
        <end position="45"/>
    </location>
</feature>
<feature type="transmembrane region" description="Helical" evidence="1">
    <location>
        <begin position="57"/>
        <end position="77"/>
    </location>
</feature>
<feature type="transmembrane region" description="Helical" evidence="1">
    <location>
        <begin position="81"/>
        <end position="101"/>
    </location>
</feature>
<feature type="transmembrane region" description="Helical" evidence="1">
    <location>
        <begin position="124"/>
        <end position="144"/>
    </location>
</feature>
<feature type="transmembrane region" description="Helical" evidence="1">
    <location>
        <begin position="156"/>
        <end position="176"/>
    </location>
</feature>
<organism>
    <name type="scientific">Methanocaldococcus jannaschii (strain ATCC 43067 / DSM 2661 / JAL-1 / JCM 10045 / NBRC 100440)</name>
    <name type="common">Methanococcus jannaschii</name>
    <dbReference type="NCBI Taxonomy" id="243232"/>
    <lineage>
        <taxon>Archaea</taxon>
        <taxon>Methanobacteriati</taxon>
        <taxon>Methanobacteriota</taxon>
        <taxon>Methanomada group</taxon>
        <taxon>Methanococci</taxon>
        <taxon>Methanococcales</taxon>
        <taxon>Methanocaldococcaceae</taxon>
        <taxon>Methanocaldococcus</taxon>
    </lineage>
</organism>
<reference key="1">
    <citation type="journal article" date="1996" name="Science">
        <title>Complete genome sequence of the methanogenic archaeon, Methanococcus jannaschii.</title>
        <authorList>
            <person name="Bult C.J."/>
            <person name="White O."/>
            <person name="Olsen G.J."/>
            <person name="Zhou L."/>
            <person name="Fleischmann R.D."/>
            <person name="Sutton G.G."/>
            <person name="Blake J.A."/>
            <person name="FitzGerald L.M."/>
            <person name="Clayton R.A."/>
            <person name="Gocayne J.D."/>
            <person name="Kerlavage A.R."/>
            <person name="Dougherty B.A."/>
            <person name="Tomb J.-F."/>
            <person name="Adams M.D."/>
            <person name="Reich C.I."/>
            <person name="Overbeek R."/>
            <person name="Kirkness E.F."/>
            <person name="Weinstock K.G."/>
            <person name="Merrick J.M."/>
            <person name="Glodek A."/>
            <person name="Scott J.L."/>
            <person name="Geoghagen N.S.M."/>
            <person name="Weidman J.F."/>
            <person name="Fuhrmann J.L."/>
            <person name="Nguyen D."/>
            <person name="Utterback T.R."/>
            <person name="Kelley J.M."/>
            <person name="Peterson J.D."/>
            <person name="Sadow P.W."/>
            <person name="Hanna M.C."/>
            <person name="Cotton M.D."/>
            <person name="Roberts K.M."/>
            <person name="Hurst M.A."/>
            <person name="Kaine B.P."/>
            <person name="Borodovsky M."/>
            <person name="Klenk H.-P."/>
            <person name="Fraser C.M."/>
            <person name="Smith H.O."/>
            <person name="Woese C.R."/>
            <person name="Venter J.C."/>
        </authorList>
    </citation>
    <scope>NUCLEOTIDE SEQUENCE [LARGE SCALE GENOMIC DNA]</scope>
    <source>
        <strain>ATCC 43067 / DSM 2661 / JAL-1 / JCM 10045 / NBRC 100440</strain>
    </source>
</reference>
<protein>
    <recommendedName>
        <fullName>Uncharacterized protein MJ0271</fullName>
    </recommendedName>
</protein>
<name>Y271_METJA</name>
<dbReference type="EMBL" id="L77117">
    <property type="protein sequence ID" value="AAB98260.1"/>
    <property type="molecule type" value="Genomic_DNA"/>
</dbReference>
<dbReference type="PIR" id="H64333">
    <property type="entry name" value="H64333"/>
</dbReference>
<dbReference type="RefSeq" id="WP_010869768.1">
    <property type="nucleotide sequence ID" value="NC_000909.1"/>
</dbReference>
<dbReference type="SMR" id="Q57719"/>
<dbReference type="FunCoup" id="Q57719">
    <property type="interactions" value="1"/>
</dbReference>
<dbReference type="PaxDb" id="243232-MJ_0271"/>
<dbReference type="DNASU" id="1451125"/>
<dbReference type="EnsemblBacteria" id="AAB98260">
    <property type="protein sequence ID" value="AAB98260"/>
    <property type="gene ID" value="MJ_0271"/>
</dbReference>
<dbReference type="GeneID" id="1451125"/>
<dbReference type="KEGG" id="mja:MJ_0271"/>
<dbReference type="eggNOG" id="arCOG12716">
    <property type="taxonomic scope" value="Archaea"/>
</dbReference>
<dbReference type="HOGENOM" id="CLU_1493004_0_0_2"/>
<dbReference type="InParanoid" id="Q57719"/>
<dbReference type="OrthoDB" id="66070at2157"/>
<dbReference type="Proteomes" id="UP000000805">
    <property type="component" value="Chromosome"/>
</dbReference>
<dbReference type="GO" id="GO:0005886">
    <property type="term" value="C:plasma membrane"/>
    <property type="evidence" value="ECO:0007669"/>
    <property type="project" value="UniProtKB-SubCell"/>
</dbReference>
<proteinExistence type="predicted"/>
<keyword id="KW-1003">Cell membrane</keyword>
<keyword id="KW-0472">Membrane</keyword>
<keyword id="KW-1185">Reference proteome</keyword>
<keyword id="KW-0812">Transmembrane</keyword>
<keyword id="KW-1133">Transmembrane helix</keyword>
<accession>Q57719</accession>
<comment type="subcellular location">
    <subcellularLocation>
        <location evidence="2">Cell membrane</location>
        <topology evidence="2">Multi-pass membrane protein</topology>
    </subcellularLocation>
</comment>